<keyword id="KW-0025">Alternative splicing</keyword>
<keyword id="KW-0067">ATP-binding</keyword>
<keyword id="KW-0378">Hydrolase</keyword>
<keyword id="KW-0460">Magnesium</keyword>
<keyword id="KW-0472">Membrane</keyword>
<keyword id="KW-0547">Nucleotide-binding</keyword>
<keyword id="KW-1185">Reference proteome</keyword>
<keyword id="KW-0812">Transmembrane</keyword>
<keyword id="KW-1133">Transmembrane helix</keyword>
<proteinExistence type="inferred from homology"/>
<comment type="catalytic activity">
    <reaction evidence="1">
        <text>ATP + H2O = ADP + phosphate + H(+)</text>
        <dbReference type="Rhea" id="RHEA:13065"/>
        <dbReference type="ChEBI" id="CHEBI:15377"/>
        <dbReference type="ChEBI" id="CHEBI:15378"/>
        <dbReference type="ChEBI" id="CHEBI:30616"/>
        <dbReference type="ChEBI" id="CHEBI:43474"/>
        <dbReference type="ChEBI" id="CHEBI:456216"/>
    </reaction>
</comment>
<comment type="cofactor">
    <cofactor evidence="1">
        <name>Mg(2+)</name>
        <dbReference type="ChEBI" id="CHEBI:18420"/>
    </cofactor>
</comment>
<comment type="subcellular location">
    <subcellularLocation>
        <location evidence="2">Membrane</location>
        <topology evidence="2">Single-pass membrane protein</topology>
    </subcellularLocation>
</comment>
<comment type="alternative products">
    <event type="alternative splicing"/>
    <isoform>
        <id>Q9LH82-1</id>
        <name>1</name>
        <sequence type="displayed"/>
    </isoform>
    <isoform>
        <id>Q9LH82-2</id>
        <name>2</name>
        <sequence type="described" ref="VSP_057974"/>
    </isoform>
</comment>
<comment type="similarity">
    <text evidence="4">Belongs to the AAA ATPase family. BCS1 subfamily.</text>
</comment>
<organism evidence="7">
    <name type="scientific">Arabidopsis thaliana</name>
    <name type="common">Mouse-ear cress</name>
    <dbReference type="NCBI Taxonomy" id="3702"/>
    <lineage>
        <taxon>Eukaryota</taxon>
        <taxon>Viridiplantae</taxon>
        <taxon>Streptophyta</taxon>
        <taxon>Embryophyta</taxon>
        <taxon>Tracheophyta</taxon>
        <taxon>Spermatophyta</taxon>
        <taxon>Magnoliopsida</taxon>
        <taxon>eudicotyledons</taxon>
        <taxon>Gunneridae</taxon>
        <taxon>Pentapetalae</taxon>
        <taxon>rosids</taxon>
        <taxon>malvids</taxon>
        <taxon>Brassicales</taxon>
        <taxon>Brassicaceae</taxon>
        <taxon>Camelineae</taxon>
        <taxon>Arabidopsis</taxon>
    </lineage>
</organism>
<reference key="1">
    <citation type="journal article" date="2000" name="DNA Res.">
        <title>Structural analysis of Arabidopsis thaliana chromosome 3. II. Sequence features of the 4,251,695 bp regions covered by 90 P1, TAC and BAC clones.</title>
        <authorList>
            <person name="Kaneko T."/>
            <person name="Katoh T."/>
            <person name="Sato S."/>
            <person name="Nakamura Y."/>
            <person name="Asamizu E."/>
            <person name="Tabata S."/>
        </authorList>
    </citation>
    <scope>NUCLEOTIDE SEQUENCE [LARGE SCALE GENOMIC DNA]</scope>
    <source>
        <strain>cv. Columbia</strain>
    </source>
</reference>
<reference key="2">
    <citation type="journal article" date="2017" name="Plant J.">
        <title>Araport11: a complete reannotation of the Arabidopsis thaliana reference genome.</title>
        <authorList>
            <person name="Cheng C.Y."/>
            <person name="Krishnakumar V."/>
            <person name="Chan A.P."/>
            <person name="Thibaud-Nissen F."/>
            <person name="Schobel S."/>
            <person name="Town C.D."/>
        </authorList>
    </citation>
    <scope>GENOME REANNOTATION</scope>
    <source>
        <strain>cv. Columbia</strain>
    </source>
</reference>
<name>AATP7_ARATH</name>
<accession>Q9LH82</accession>
<accession>Q2V3R7</accession>
<gene>
    <name evidence="5" type="ordered locus">At3g28540</name>
    <name evidence="6" type="ORF">T20D4.4</name>
</gene>
<dbReference type="EC" id="3.6.1.-" evidence="1"/>
<dbReference type="EMBL" id="AP002059">
    <property type="protein sequence ID" value="BAB01955.1"/>
    <property type="molecule type" value="Genomic_DNA"/>
</dbReference>
<dbReference type="EMBL" id="CP002686">
    <property type="protein sequence ID" value="AEE77457.1"/>
    <property type="molecule type" value="Genomic_DNA"/>
</dbReference>
<dbReference type="EMBL" id="CP002686">
    <property type="protein sequence ID" value="AEE77458.1"/>
    <property type="molecule type" value="Genomic_DNA"/>
</dbReference>
<dbReference type="RefSeq" id="NP_001030789.1">
    <molecule id="Q9LH82-2"/>
    <property type="nucleotide sequence ID" value="NM_001035712.1"/>
</dbReference>
<dbReference type="RefSeq" id="NP_189495.1">
    <molecule id="Q9LH82-1"/>
    <property type="nucleotide sequence ID" value="NM_113774.3"/>
</dbReference>
<dbReference type="SMR" id="Q9LH82"/>
<dbReference type="FunCoup" id="Q9LH82">
    <property type="interactions" value="1323"/>
</dbReference>
<dbReference type="STRING" id="3702.Q9LH82"/>
<dbReference type="iPTMnet" id="Q9LH82"/>
<dbReference type="PaxDb" id="3702-AT3G28540.1"/>
<dbReference type="ProteomicsDB" id="244622">
    <molecule id="Q9LH82-1"/>
</dbReference>
<dbReference type="EnsemblPlants" id="AT3G28540.1">
    <molecule id="Q9LH82-1"/>
    <property type="protein sequence ID" value="AT3G28540.1"/>
    <property type="gene ID" value="AT3G28540"/>
</dbReference>
<dbReference type="EnsemblPlants" id="AT3G28540.2">
    <molecule id="Q9LH82-2"/>
    <property type="protein sequence ID" value="AT3G28540.2"/>
    <property type="gene ID" value="AT3G28540"/>
</dbReference>
<dbReference type="GeneID" id="822484"/>
<dbReference type="Gramene" id="AT3G28540.1">
    <molecule id="Q9LH82-1"/>
    <property type="protein sequence ID" value="AT3G28540.1"/>
    <property type="gene ID" value="AT3G28540"/>
</dbReference>
<dbReference type="Gramene" id="AT3G28540.2">
    <molecule id="Q9LH82-2"/>
    <property type="protein sequence ID" value="AT3G28540.2"/>
    <property type="gene ID" value="AT3G28540"/>
</dbReference>
<dbReference type="KEGG" id="ath:AT3G28540"/>
<dbReference type="Araport" id="AT3G28540"/>
<dbReference type="TAIR" id="AT3G28540"/>
<dbReference type="eggNOG" id="KOG0743">
    <property type="taxonomic scope" value="Eukaryota"/>
</dbReference>
<dbReference type="InParanoid" id="Q9LH82"/>
<dbReference type="OMA" id="WSANRIP"/>
<dbReference type="PhylomeDB" id="Q9LH82"/>
<dbReference type="PRO" id="PR:Q9LH82"/>
<dbReference type="Proteomes" id="UP000006548">
    <property type="component" value="Chromosome 3"/>
</dbReference>
<dbReference type="ExpressionAtlas" id="Q9LH82">
    <property type="expression patterns" value="baseline and differential"/>
</dbReference>
<dbReference type="GO" id="GO:0016020">
    <property type="term" value="C:membrane"/>
    <property type="evidence" value="ECO:0007669"/>
    <property type="project" value="UniProtKB-SubCell"/>
</dbReference>
<dbReference type="GO" id="GO:0005524">
    <property type="term" value="F:ATP binding"/>
    <property type="evidence" value="ECO:0007669"/>
    <property type="project" value="UniProtKB-KW"/>
</dbReference>
<dbReference type="GO" id="GO:0016887">
    <property type="term" value="F:ATP hydrolysis activity"/>
    <property type="evidence" value="ECO:0007669"/>
    <property type="project" value="InterPro"/>
</dbReference>
<dbReference type="GO" id="GO:0006950">
    <property type="term" value="P:response to stress"/>
    <property type="evidence" value="ECO:0007669"/>
    <property type="project" value="UniProtKB-ARBA"/>
</dbReference>
<dbReference type="CDD" id="cd19510">
    <property type="entry name" value="RecA-like_BCS1"/>
    <property type="match status" value="1"/>
</dbReference>
<dbReference type="FunFam" id="3.40.50.300:FF:001122">
    <property type="entry name" value="AAA-ATPase ASD, mitochondrial"/>
    <property type="match status" value="1"/>
</dbReference>
<dbReference type="Gene3D" id="6.10.280.40">
    <property type="match status" value="1"/>
</dbReference>
<dbReference type="Gene3D" id="3.40.50.300">
    <property type="entry name" value="P-loop containing nucleotide triphosphate hydrolases"/>
    <property type="match status" value="1"/>
</dbReference>
<dbReference type="InterPro" id="IPR003593">
    <property type="entry name" value="AAA+_ATPase"/>
</dbReference>
<dbReference type="InterPro" id="IPR025753">
    <property type="entry name" value="AAA_N_dom"/>
</dbReference>
<dbReference type="InterPro" id="IPR003959">
    <property type="entry name" value="ATPase_AAA_core"/>
</dbReference>
<dbReference type="InterPro" id="IPR050747">
    <property type="entry name" value="Mitochondrial_chaperone_BCS1"/>
</dbReference>
<dbReference type="InterPro" id="IPR027417">
    <property type="entry name" value="P-loop_NTPase"/>
</dbReference>
<dbReference type="PANTHER" id="PTHR23070">
    <property type="entry name" value="BCS1 AAA-TYPE ATPASE"/>
    <property type="match status" value="1"/>
</dbReference>
<dbReference type="Pfam" id="PF00004">
    <property type="entry name" value="AAA"/>
    <property type="match status" value="1"/>
</dbReference>
<dbReference type="Pfam" id="PF14363">
    <property type="entry name" value="AAA_assoc"/>
    <property type="match status" value="1"/>
</dbReference>
<dbReference type="SMART" id="SM00382">
    <property type="entry name" value="AAA"/>
    <property type="match status" value="1"/>
</dbReference>
<dbReference type="SUPFAM" id="SSF52540">
    <property type="entry name" value="P-loop containing nucleoside triphosphate hydrolases"/>
    <property type="match status" value="1"/>
</dbReference>
<feature type="chain" id="PRO_0000434709" description="AAA-ATPase At3g28540">
    <location>
        <begin position="1"/>
        <end position="510"/>
    </location>
</feature>
<feature type="transmembrane region" description="Helical" evidence="2">
    <location>
        <begin position="7"/>
        <end position="25"/>
    </location>
</feature>
<feature type="region of interest" description="Disordered" evidence="3">
    <location>
        <begin position="460"/>
        <end position="510"/>
    </location>
</feature>
<feature type="binding site" evidence="2">
    <location>
        <begin position="246"/>
        <end position="253"/>
    </location>
    <ligand>
        <name>ATP</name>
        <dbReference type="ChEBI" id="CHEBI:30616"/>
    </ligand>
</feature>
<feature type="splice variant" id="VSP_057974" description="In isoform 2.">
    <original>NHI</original>
    <variation>K</variation>
    <location>
        <begin position="508"/>
        <end position="510"/>
    </location>
</feature>
<protein>
    <recommendedName>
        <fullName>AAA-ATPase At3g28540</fullName>
        <ecNumber evidence="1">3.6.1.-</ecNumber>
    </recommendedName>
</protein>
<evidence type="ECO:0000250" key="1">
    <source>
        <dbReference type="UniProtKB" id="Q9FLD5"/>
    </source>
</evidence>
<evidence type="ECO:0000255" key="2"/>
<evidence type="ECO:0000256" key="3">
    <source>
        <dbReference type="SAM" id="MobiDB-lite"/>
    </source>
</evidence>
<evidence type="ECO:0000305" key="4"/>
<evidence type="ECO:0000312" key="5">
    <source>
        <dbReference type="EMBL" id="AEE77457.1"/>
    </source>
</evidence>
<evidence type="ECO:0000312" key="6">
    <source>
        <dbReference type="EMBL" id="BAB01955.1"/>
    </source>
</evidence>
<evidence type="ECO:0000312" key="7">
    <source>
        <dbReference type="Proteomes" id="UP000006548"/>
    </source>
</evidence>
<sequence length="510" mass="59151">MFEAGGLFGFTGTTMASLMFFWSVYRQFVPYQIRDYLEKCFYKMFGLVSNSVHIKFTEYTEDKGLKKSQAYDLIRNYLSSKSTARAQRLKANESKNSKSLVLSLDNHEAVEDVFQGVKVVWSLSVWKSNDQADSSEKRYLTLSFHNRYREMITTTYLDHVLREGKEIGLKNRERKLYTNNSSQDYSAWREGRWSNVPFDHPATFETLAMDLEKKEGMKKDLIKFTKGKDYYRKVGKPWKRGYLLFGPPGTGKSTMISAMANFLEYDVYDLELTTVKDNSELKKLMLDTKGKSIVVIEDIDCSLDLTGQRKKKKEEDEDEEEEEKKKEAEKLLKRERGERESKVTLSGLLNAIDGLWSACSGEKIIVFTTNYLDKLDPALIRRGRMDNHIEMSYCRFEAFKVLAKNYLEIESHDLFGEIKRLVEETDMSPADVAENLMPKSDEDDADICLTRLVKSLEEEKEKAKKLAEEEKMKKAARDARRIKKKAEEEHKKKNKVEENGDVSHDNGNHI</sequence>